<comment type="function">
    <text evidence="1">Catalyzes the stereospecific hydrolysis of the cyclic amide bond of D-hydantoin derivatives with an aromatic side chains at the 5'-position. Has no activity on dihydropyrimidines. The physiological function is unknown.</text>
</comment>
<comment type="catalytic activity">
    <reaction evidence="1">
        <text>D-5-phenylhydantoin + H2O = N-carbamoyl-D-phenylglycine + H(+)</text>
        <dbReference type="Rhea" id="RHEA:51664"/>
        <dbReference type="ChEBI" id="CHEBI:15377"/>
        <dbReference type="ChEBI" id="CHEBI:15378"/>
        <dbReference type="ChEBI" id="CHEBI:140750"/>
        <dbReference type="ChEBI" id="CHEBI:140758"/>
    </reaction>
</comment>
<comment type="cofactor">
    <cofactor evidence="1">
        <name>a divalent metal cation</name>
        <dbReference type="ChEBI" id="CHEBI:60240"/>
    </cofactor>
    <text evidence="1">Binds 2 divalent metal cations per subunit.</text>
</comment>
<comment type="subunit">
    <text evidence="1">Homotetramer.</text>
</comment>
<comment type="PTM">
    <text evidence="1">Carboxylation allows a single lysine to coordinate two divalent metal cations.</text>
</comment>
<comment type="similarity">
    <text evidence="1">Belongs to the metallo-dependent hydrolases superfamily. Hydantoinase/dihydropyrimidinase family.</text>
</comment>
<sequence length="461" mass="51029">MRVLIKNGTVVNADGQAKQDLLIESGIVRQLGNNISPQLPYEEIDATGCYVFPGGVDVHTHFNIDVGIARSCDDFFTGTRAAACGGTTTIIDHMGFGPNGCRLRHQLEVYRGYAAHKAVIDYSFHGVIQHINHAILDEIPMMVEEGLSSFKLYLTYQYKLNDDEVLQALRRLHESGALTTVHPENDAAIASKRAEFIAAGLTAPRYHALSRPLECEAEAIARMINLAQIAGNAPLYIVHLSNGLGLDYLRLARANHQPVWVETCPQYLLLDERSYDTEDGMKFILSPPLRNVREQDKLWCGISDGAIDVVATDHCTFSMAQRLQISKGDFSRCPNGLPGVENRMQLLFSSGVMTGRISPERFVELTSAMPARLFGLWPQKGLLAPGSDGDVVIIDPRQSQQIQHRHLHDNADYSPWEGFTCQGAIVRTLSRGETIFCDGTFTGKAGRGRFLRRKPFVPPVL</sequence>
<gene>
    <name evidence="1" type="primary">hyuA</name>
    <name type="ordered locus">ECIAI39_3288</name>
</gene>
<evidence type="ECO:0000255" key="1">
    <source>
        <dbReference type="HAMAP-Rule" id="MF_01644"/>
    </source>
</evidence>
<feature type="chain" id="PRO_1000186910" description="D-phenylhydantoinase">
    <location>
        <begin position="1"/>
        <end position="461"/>
    </location>
</feature>
<feature type="binding site" evidence="1">
    <location>
        <position position="59"/>
    </location>
    <ligand>
        <name>a divalent metal cation</name>
        <dbReference type="ChEBI" id="CHEBI:60240"/>
        <label>1</label>
    </ligand>
</feature>
<feature type="binding site" evidence="1">
    <location>
        <position position="61"/>
    </location>
    <ligand>
        <name>a divalent metal cation</name>
        <dbReference type="ChEBI" id="CHEBI:60240"/>
        <label>1</label>
    </ligand>
</feature>
<feature type="binding site" description="via carbamate group" evidence="1">
    <location>
        <position position="151"/>
    </location>
    <ligand>
        <name>a divalent metal cation</name>
        <dbReference type="ChEBI" id="CHEBI:60240"/>
        <label>1</label>
    </ligand>
</feature>
<feature type="binding site" description="via carbamate group" evidence="1">
    <location>
        <position position="151"/>
    </location>
    <ligand>
        <name>a divalent metal cation</name>
        <dbReference type="ChEBI" id="CHEBI:60240"/>
        <label>2</label>
    </ligand>
</feature>
<feature type="binding site" evidence="1">
    <location>
        <position position="156"/>
    </location>
    <ligand>
        <name>substrate</name>
    </ligand>
</feature>
<feature type="binding site" evidence="1">
    <location>
        <position position="182"/>
    </location>
    <ligand>
        <name>a divalent metal cation</name>
        <dbReference type="ChEBI" id="CHEBI:60240"/>
        <label>2</label>
    </ligand>
</feature>
<feature type="binding site" evidence="1">
    <location>
        <position position="239"/>
    </location>
    <ligand>
        <name>a divalent metal cation</name>
        <dbReference type="ChEBI" id="CHEBI:60240"/>
        <label>2</label>
    </ligand>
</feature>
<feature type="binding site" evidence="1">
    <location>
        <position position="286"/>
    </location>
    <ligand>
        <name>substrate</name>
    </ligand>
</feature>
<feature type="binding site" evidence="1">
    <location>
        <position position="313"/>
    </location>
    <ligand>
        <name>a divalent metal cation</name>
        <dbReference type="ChEBI" id="CHEBI:60240"/>
        <label>1</label>
    </ligand>
</feature>
<feature type="binding site" evidence="1">
    <location>
        <position position="335"/>
    </location>
    <ligand>
        <name>substrate</name>
    </ligand>
</feature>
<feature type="modified residue" description="N6-carboxylysine" evidence="1">
    <location>
        <position position="151"/>
    </location>
</feature>
<reference key="1">
    <citation type="journal article" date="2009" name="PLoS Genet.">
        <title>Organised genome dynamics in the Escherichia coli species results in highly diverse adaptive paths.</title>
        <authorList>
            <person name="Touchon M."/>
            <person name="Hoede C."/>
            <person name="Tenaillon O."/>
            <person name="Barbe V."/>
            <person name="Baeriswyl S."/>
            <person name="Bidet P."/>
            <person name="Bingen E."/>
            <person name="Bonacorsi S."/>
            <person name="Bouchier C."/>
            <person name="Bouvet O."/>
            <person name="Calteau A."/>
            <person name="Chiapello H."/>
            <person name="Clermont O."/>
            <person name="Cruveiller S."/>
            <person name="Danchin A."/>
            <person name="Diard M."/>
            <person name="Dossat C."/>
            <person name="Karoui M.E."/>
            <person name="Frapy E."/>
            <person name="Garry L."/>
            <person name="Ghigo J.M."/>
            <person name="Gilles A.M."/>
            <person name="Johnson J."/>
            <person name="Le Bouguenec C."/>
            <person name="Lescat M."/>
            <person name="Mangenot S."/>
            <person name="Martinez-Jehanne V."/>
            <person name="Matic I."/>
            <person name="Nassif X."/>
            <person name="Oztas S."/>
            <person name="Petit M.A."/>
            <person name="Pichon C."/>
            <person name="Rouy Z."/>
            <person name="Ruf C.S."/>
            <person name="Schneider D."/>
            <person name="Tourret J."/>
            <person name="Vacherie B."/>
            <person name="Vallenet D."/>
            <person name="Medigue C."/>
            <person name="Rocha E.P.C."/>
            <person name="Denamur E."/>
        </authorList>
    </citation>
    <scope>NUCLEOTIDE SEQUENCE [LARGE SCALE GENOMIC DNA]</scope>
    <source>
        <strain>IAI39 / ExPEC</strain>
    </source>
</reference>
<organism>
    <name type="scientific">Escherichia coli O7:K1 (strain IAI39 / ExPEC)</name>
    <dbReference type="NCBI Taxonomy" id="585057"/>
    <lineage>
        <taxon>Bacteria</taxon>
        <taxon>Pseudomonadati</taxon>
        <taxon>Pseudomonadota</taxon>
        <taxon>Gammaproteobacteria</taxon>
        <taxon>Enterobacterales</taxon>
        <taxon>Enterobacteriaceae</taxon>
        <taxon>Escherichia</taxon>
    </lineage>
</organism>
<protein>
    <recommendedName>
        <fullName evidence="1">D-phenylhydantoinase</fullName>
        <ecNumber evidence="1">3.5.2.-</ecNumber>
    </recommendedName>
    <alternativeName>
        <fullName evidence="1">Hydantoin-utilizing enzyme HyuA</fullName>
    </alternativeName>
</protein>
<name>PHYDA_ECO7I</name>
<dbReference type="EC" id="3.5.2.-" evidence="1"/>
<dbReference type="EMBL" id="CU928164">
    <property type="protein sequence ID" value="CAR19407.1"/>
    <property type="molecule type" value="Genomic_DNA"/>
</dbReference>
<dbReference type="RefSeq" id="WP_001264448.1">
    <property type="nucleotide sequence ID" value="NC_011750.1"/>
</dbReference>
<dbReference type="RefSeq" id="YP_002409211.1">
    <property type="nucleotide sequence ID" value="NC_011750.1"/>
</dbReference>
<dbReference type="SMR" id="B7NW14"/>
<dbReference type="STRING" id="585057.ECIAI39_3288"/>
<dbReference type="KEGG" id="ect:ECIAI39_3288"/>
<dbReference type="PATRIC" id="fig|585057.6.peg.3411"/>
<dbReference type="HOGENOM" id="CLU_015572_2_0_6"/>
<dbReference type="Proteomes" id="UP000000749">
    <property type="component" value="Chromosome"/>
</dbReference>
<dbReference type="GO" id="GO:0005829">
    <property type="term" value="C:cytosol"/>
    <property type="evidence" value="ECO:0007669"/>
    <property type="project" value="TreeGrafter"/>
</dbReference>
<dbReference type="GO" id="GO:0016812">
    <property type="term" value="F:hydrolase activity, acting on carbon-nitrogen (but not peptide) bonds, in cyclic amides"/>
    <property type="evidence" value="ECO:0007669"/>
    <property type="project" value="UniProtKB-UniRule"/>
</dbReference>
<dbReference type="GO" id="GO:0046872">
    <property type="term" value="F:metal ion binding"/>
    <property type="evidence" value="ECO:0007669"/>
    <property type="project" value="UniProtKB-KW"/>
</dbReference>
<dbReference type="GO" id="GO:0006208">
    <property type="term" value="P:pyrimidine nucleobase catabolic process"/>
    <property type="evidence" value="ECO:0007669"/>
    <property type="project" value="InterPro"/>
</dbReference>
<dbReference type="CDD" id="cd01314">
    <property type="entry name" value="D-HYD"/>
    <property type="match status" value="1"/>
</dbReference>
<dbReference type="FunFam" id="3.20.20.140:FF:000026">
    <property type="entry name" value="D-phenylhydantoinase"/>
    <property type="match status" value="1"/>
</dbReference>
<dbReference type="Gene3D" id="3.20.20.140">
    <property type="entry name" value="Metal-dependent hydrolases"/>
    <property type="match status" value="1"/>
</dbReference>
<dbReference type="Gene3D" id="2.30.40.10">
    <property type="entry name" value="Urease, subunit C, domain 1"/>
    <property type="match status" value="1"/>
</dbReference>
<dbReference type="HAMAP" id="MF_01644">
    <property type="entry name" value="D_hydantoinase"/>
    <property type="match status" value="1"/>
</dbReference>
<dbReference type="InterPro" id="IPR006680">
    <property type="entry name" value="Amidohydro-rel"/>
</dbReference>
<dbReference type="InterPro" id="IPR023766">
    <property type="entry name" value="D_phenylhydantoinase"/>
</dbReference>
<dbReference type="InterPro" id="IPR011778">
    <property type="entry name" value="Hydantoinase/dihydroPyrase"/>
</dbReference>
<dbReference type="InterPro" id="IPR011059">
    <property type="entry name" value="Metal-dep_hydrolase_composite"/>
</dbReference>
<dbReference type="InterPro" id="IPR032466">
    <property type="entry name" value="Metal_Hydrolase"/>
</dbReference>
<dbReference type="InterPro" id="IPR050378">
    <property type="entry name" value="Metallo-dep_Hydrolases_sf"/>
</dbReference>
<dbReference type="NCBIfam" id="TIGR02033">
    <property type="entry name" value="D-hydantoinase"/>
    <property type="match status" value="1"/>
</dbReference>
<dbReference type="PANTHER" id="PTHR11647:SF1">
    <property type="entry name" value="COLLAPSIN RESPONSE MEDIATOR PROTEIN"/>
    <property type="match status" value="1"/>
</dbReference>
<dbReference type="PANTHER" id="PTHR11647">
    <property type="entry name" value="HYDRANTOINASE/DIHYDROPYRIMIDINASE FAMILY MEMBER"/>
    <property type="match status" value="1"/>
</dbReference>
<dbReference type="Pfam" id="PF01979">
    <property type="entry name" value="Amidohydro_1"/>
    <property type="match status" value="1"/>
</dbReference>
<dbReference type="SUPFAM" id="SSF51338">
    <property type="entry name" value="Composite domain of metallo-dependent hydrolases"/>
    <property type="match status" value="2"/>
</dbReference>
<dbReference type="SUPFAM" id="SSF51556">
    <property type="entry name" value="Metallo-dependent hydrolases"/>
    <property type="match status" value="1"/>
</dbReference>
<proteinExistence type="inferred from homology"/>
<keyword id="KW-0378">Hydrolase</keyword>
<keyword id="KW-0479">Metal-binding</keyword>
<accession>B7NW14</accession>